<reference key="1">
    <citation type="journal article" date="2004" name="Nat. Genet.">
        <title>Evidence in the Legionella pneumophila genome for exploitation of host cell functions and high genome plasticity.</title>
        <authorList>
            <person name="Cazalet C."/>
            <person name="Rusniok C."/>
            <person name="Brueggemann H."/>
            <person name="Zidane N."/>
            <person name="Magnier A."/>
            <person name="Ma L."/>
            <person name="Tichit M."/>
            <person name="Jarraud S."/>
            <person name="Bouchier C."/>
            <person name="Vandenesch F."/>
            <person name="Kunst F."/>
            <person name="Etienne J."/>
            <person name="Glaser P."/>
            <person name="Buchrieser C."/>
        </authorList>
    </citation>
    <scope>NUCLEOTIDE SEQUENCE [LARGE SCALE GENOMIC DNA]</scope>
    <source>
        <strain>Paris</strain>
    </source>
</reference>
<dbReference type="EC" id="3.6.1.23" evidence="1"/>
<dbReference type="EMBL" id="CR628336">
    <property type="protein sequence ID" value="CAH13704.1"/>
    <property type="molecule type" value="Genomic_DNA"/>
</dbReference>
<dbReference type="RefSeq" id="WP_014844633.1">
    <property type="nucleotide sequence ID" value="NC_006368.1"/>
</dbReference>
<dbReference type="SMR" id="Q5X242"/>
<dbReference type="KEGG" id="lpp:lpp2551"/>
<dbReference type="LegioList" id="lpp2551"/>
<dbReference type="HOGENOM" id="CLU_068508_1_1_6"/>
<dbReference type="UniPathway" id="UPA00610">
    <property type="reaction ID" value="UER00666"/>
</dbReference>
<dbReference type="GO" id="GO:0004170">
    <property type="term" value="F:dUTP diphosphatase activity"/>
    <property type="evidence" value="ECO:0007669"/>
    <property type="project" value="UniProtKB-UniRule"/>
</dbReference>
<dbReference type="GO" id="GO:0000287">
    <property type="term" value="F:magnesium ion binding"/>
    <property type="evidence" value="ECO:0007669"/>
    <property type="project" value="UniProtKB-UniRule"/>
</dbReference>
<dbReference type="GO" id="GO:0006226">
    <property type="term" value="P:dUMP biosynthetic process"/>
    <property type="evidence" value="ECO:0007669"/>
    <property type="project" value="UniProtKB-UniRule"/>
</dbReference>
<dbReference type="GO" id="GO:0046081">
    <property type="term" value="P:dUTP catabolic process"/>
    <property type="evidence" value="ECO:0007669"/>
    <property type="project" value="InterPro"/>
</dbReference>
<dbReference type="CDD" id="cd07557">
    <property type="entry name" value="trimeric_dUTPase"/>
    <property type="match status" value="1"/>
</dbReference>
<dbReference type="FunFam" id="2.70.40.10:FF:000002">
    <property type="entry name" value="dUTP diphosphatase"/>
    <property type="match status" value="1"/>
</dbReference>
<dbReference type="Gene3D" id="2.70.40.10">
    <property type="match status" value="1"/>
</dbReference>
<dbReference type="HAMAP" id="MF_00116">
    <property type="entry name" value="dUTPase_bact"/>
    <property type="match status" value="1"/>
</dbReference>
<dbReference type="InterPro" id="IPR008181">
    <property type="entry name" value="dUTPase"/>
</dbReference>
<dbReference type="InterPro" id="IPR029054">
    <property type="entry name" value="dUTPase-like"/>
</dbReference>
<dbReference type="InterPro" id="IPR036157">
    <property type="entry name" value="dUTPase-like_sf"/>
</dbReference>
<dbReference type="InterPro" id="IPR033704">
    <property type="entry name" value="dUTPase_trimeric"/>
</dbReference>
<dbReference type="NCBIfam" id="TIGR00576">
    <property type="entry name" value="dut"/>
    <property type="match status" value="1"/>
</dbReference>
<dbReference type="NCBIfam" id="NF001862">
    <property type="entry name" value="PRK00601.1"/>
    <property type="match status" value="1"/>
</dbReference>
<dbReference type="PANTHER" id="PTHR11241">
    <property type="entry name" value="DEOXYURIDINE 5'-TRIPHOSPHATE NUCLEOTIDOHYDROLASE"/>
    <property type="match status" value="1"/>
</dbReference>
<dbReference type="PANTHER" id="PTHR11241:SF0">
    <property type="entry name" value="DEOXYURIDINE 5'-TRIPHOSPHATE NUCLEOTIDOHYDROLASE"/>
    <property type="match status" value="1"/>
</dbReference>
<dbReference type="Pfam" id="PF00692">
    <property type="entry name" value="dUTPase"/>
    <property type="match status" value="1"/>
</dbReference>
<dbReference type="SUPFAM" id="SSF51283">
    <property type="entry name" value="dUTPase-like"/>
    <property type="match status" value="1"/>
</dbReference>
<name>DUT_LEGPA</name>
<gene>
    <name evidence="1" type="primary">dut</name>
    <name type="ordered locus">lpp2551</name>
</gene>
<proteinExistence type="inferred from homology"/>
<evidence type="ECO:0000255" key="1">
    <source>
        <dbReference type="HAMAP-Rule" id="MF_00116"/>
    </source>
</evidence>
<protein>
    <recommendedName>
        <fullName evidence="1">Deoxyuridine 5'-triphosphate nucleotidohydrolase</fullName>
        <shortName evidence="1">dUTPase</shortName>
        <ecNumber evidence="1">3.6.1.23</ecNumber>
    </recommendedName>
    <alternativeName>
        <fullName evidence="1">dUTP pyrophosphatase</fullName>
    </alternativeName>
</protein>
<sequence>MHQVIQLKILDSRIGDTIPLPAYATDGSAGLDLRVCISEPMQVAPQQTVLLPTGIAIYIADPKLAAVILPRSGLGHKNGIVLGNLVGLIDSDYQGELKISCWNRSQEHFTVNPGDRIAQLVFIPVVQTSFEVVNEFTESSRGEGGFGSSGRY</sequence>
<organism>
    <name type="scientific">Legionella pneumophila (strain Paris)</name>
    <dbReference type="NCBI Taxonomy" id="297246"/>
    <lineage>
        <taxon>Bacteria</taxon>
        <taxon>Pseudomonadati</taxon>
        <taxon>Pseudomonadota</taxon>
        <taxon>Gammaproteobacteria</taxon>
        <taxon>Legionellales</taxon>
        <taxon>Legionellaceae</taxon>
        <taxon>Legionella</taxon>
    </lineage>
</organism>
<accession>Q5X242</accession>
<feature type="chain" id="PRO_0000182873" description="Deoxyuridine 5'-triphosphate nucleotidohydrolase">
    <location>
        <begin position="1"/>
        <end position="152"/>
    </location>
</feature>
<feature type="binding site" evidence="1">
    <location>
        <begin position="71"/>
        <end position="73"/>
    </location>
    <ligand>
        <name>substrate</name>
    </ligand>
</feature>
<feature type="binding site" evidence="1">
    <location>
        <position position="84"/>
    </location>
    <ligand>
        <name>substrate</name>
    </ligand>
</feature>
<feature type="binding site" evidence="1">
    <location>
        <begin position="88"/>
        <end position="90"/>
    </location>
    <ligand>
        <name>substrate</name>
    </ligand>
</feature>
<feature type="binding site" evidence="1">
    <location>
        <position position="98"/>
    </location>
    <ligand>
        <name>substrate</name>
    </ligand>
</feature>
<comment type="function">
    <text evidence="1">This enzyme is involved in nucleotide metabolism: it produces dUMP, the immediate precursor of thymidine nucleotides and it decreases the intracellular concentration of dUTP so that uracil cannot be incorporated into DNA.</text>
</comment>
<comment type="catalytic activity">
    <reaction evidence="1">
        <text>dUTP + H2O = dUMP + diphosphate + H(+)</text>
        <dbReference type="Rhea" id="RHEA:10248"/>
        <dbReference type="ChEBI" id="CHEBI:15377"/>
        <dbReference type="ChEBI" id="CHEBI:15378"/>
        <dbReference type="ChEBI" id="CHEBI:33019"/>
        <dbReference type="ChEBI" id="CHEBI:61555"/>
        <dbReference type="ChEBI" id="CHEBI:246422"/>
        <dbReference type="EC" id="3.6.1.23"/>
    </reaction>
</comment>
<comment type="cofactor">
    <cofactor evidence="1">
        <name>Mg(2+)</name>
        <dbReference type="ChEBI" id="CHEBI:18420"/>
    </cofactor>
</comment>
<comment type="pathway">
    <text evidence="1">Pyrimidine metabolism; dUMP biosynthesis; dUMP from dCTP (dUTP route): step 2/2.</text>
</comment>
<comment type="similarity">
    <text evidence="1">Belongs to the dUTPase family.</text>
</comment>
<keyword id="KW-0378">Hydrolase</keyword>
<keyword id="KW-0460">Magnesium</keyword>
<keyword id="KW-0479">Metal-binding</keyword>
<keyword id="KW-0546">Nucleotide metabolism</keyword>